<gene>
    <name evidence="1" type="primary">tiaS</name>
    <name type="ordered locus">Hbut_0008</name>
</gene>
<proteinExistence type="inferred from homology"/>
<accession>A2BIT1</accession>
<dbReference type="EC" id="6.3.4.22" evidence="1"/>
<dbReference type="EMBL" id="CP000493">
    <property type="protein sequence ID" value="ABM79887.1"/>
    <property type="molecule type" value="Genomic_DNA"/>
</dbReference>
<dbReference type="RefSeq" id="WP_011821204.1">
    <property type="nucleotide sequence ID" value="NC_008818.1"/>
</dbReference>
<dbReference type="SMR" id="A2BIT1"/>
<dbReference type="STRING" id="415426.Hbut_0008"/>
<dbReference type="EnsemblBacteria" id="ABM79887">
    <property type="protein sequence ID" value="ABM79887"/>
    <property type="gene ID" value="Hbut_0008"/>
</dbReference>
<dbReference type="GeneID" id="4781575"/>
<dbReference type="KEGG" id="hbu:Hbut_0008"/>
<dbReference type="eggNOG" id="arCOG01115">
    <property type="taxonomic scope" value="Archaea"/>
</dbReference>
<dbReference type="HOGENOM" id="CLU_675459_0_0_2"/>
<dbReference type="OrthoDB" id="39189at2157"/>
<dbReference type="Proteomes" id="UP000002593">
    <property type="component" value="Chromosome"/>
</dbReference>
<dbReference type="GO" id="GO:0005737">
    <property type="term" value="C:cytoplasm"/>
    <property type="evidence" value="ECO:0007669"/>
    <property type="project" value="UniProtKB-SubCell"/>
</dbReference>
<dbReference type="GO" id="GO:0005524">
    <property type="term" value="F:ATP binding"/>
    <property type="evidence" value="ECO:0007669"/>
    <property type="project" value="UniProtKB-KW"/>
</dbReference>
<dbReference type="GO" id="GO:0016879">
    <property type="term" value="F:ligase activity, forming carbon-nitrogen bonds"/>
    <property type="evidence" value="ECO:0007669"/>
    <property type="project" value="UniProtKB-UniRule"/>
</dbReference>
<dbReference type="GO" id="GO:0002101">
    <property type="term" value="P:tRNA wobble cytosine modification"/>
    <property type="evidence" value="ECO:0007669"/>
    <property type="project" value="UniProtKB-UniRule"/>
</dbReference>
<dbReference type="Gene3D" id="2.40.50.1010">
    <property type="match status" value="1"/>
</dbReference>
<dbReference type="Gene3D" id="3.30.70.2200">
    <property type="match status" value="1"/>
</dbReference>
<dbReference type="Gene3D" id="3.90.600.20">
    <property type="match status" value="1"/>
</dbReference>
<dbReference type="HAMAP" id="MF_01892">
    <property type="entry name" value="tRNA_Ile2_agm2C_synt"/>
    <property type="match status" value="1"/>
</dbReference>
<dbReference type="InterPro" id="IPR053870">
    <property type="entry name" value="TiaS-like_TCKD"/>
</dbReference>
<dbReference type="InterPro" id="IPR013696">
    <property type="entry name" value="TiaS_FLD"/>
</dbReference>
<dbReference type="InterPro" id="IPR024913">
    <property type="entry name" value="tRNA_Ile2__agm2C_synt"/>
</dbReference>
<dbReference type="PANTHER" id="PTHR40705:SF2">
    <property type="entry name" value="DUF1743 DOMAIN-CONTAINING PROTEIN"/>
    <property type="match status" value="1"/>
</dbReference>
<dbReference type="PANTHER" id="PTHR40705">
    <property type="entry name" value="TRNA(ILE2) 2-AGMATINYLCYTIDINE SYNTHETASE TIAS"/>
    <property type="match status" value="1"/>
</dbReference>
<dbReference type="Pfam" id="PF08489">
    <property type="entry name" value="TiaS_FLD"/>
    <property type="match status" value="1"/>
</dbReference>
<dbReference type="Pfam" id="PF22641">
    <property type="entry name" value="TiaS_TCKD"/>
    <property type="match status" value="1"/>
</dbReference>
<name>TIAS_HYPBU</name>
<organism>
    <name type="scientific">Hyperthermus butylicus (strain DSM 5456 / JCM 9403 / PLM1-5)</name>
    <dbReference type="NCBI Taxonomy" id="415426"/>
    <lineage>
        <taxon>Archaea</taxon>
        <taxon>Thermoproteota</taxon>
        <taxon>Thermoprotei</taxon>
        <taxon>Desulfurococcales</taxon>
        <taxon>Pyrodictiaceae</taxon>
        <taxon>Hyperthermus</taxon>
    </lineage>
</organism>
<evidence type="ECO:0000255" key="1">
    <source>
        <dbReference type="HAMAP-Rule" id="MF_01892"/>
    </source>
</evidence>
<evidence type="ECO:0000256" key="2">
    <source>
        <dbReference type="SAM" id="MobiDB-lite"/>
    </source>
</evidence>
<protein>
    <recommendedName>
        <fullName evidence="1">tRNA(Ile2) 2-agmatinylcytidine synthetase TiaS</fullName>
        <shortName evidence="1">tRNA(Ile2)-agm2C synthetase</shortName>
        <ecNumber evidence="1">6.3.4.22</ecNumber>
    </recommendedName>
    <alternativeName>
        <fullName evidence="1">tRNA(Ile2) agmatidine synthetase</fullName>
    </alternativeName>
</protein>
<reference key="1">
    <citation type="journal article" date="2007" name="Archaea">
        <title>The genome of Hyperthermus butylicus: a sulfur-reducing, peptide fermenting, neutrophilic Crenarchaeote growing up to 108 degrees C.</title>
        <authorList>
            <person name="Bruegger K."/>
            <person name="Chen L."/>
            <person name="Stark M."/>
            <person name="Zibat A."/>
            <person name="Redder P."/>
            <person name="Ruepp A."/>
            <person name="Awayez M."/>
            <person name="She Q."/>
            <person name="Garrett R.A."/>
            <person name="Klenk H.-P."/>
        </authorList>
    </citation>
    <scope>NUCLEOTIDE SEQUENCE [LARGE SCALE GENOMIC DNA]</scope>
    <source>
        <strain>DSM 5456 / JCM 9403 / PLM1-5</strain>
    </source>
</reference>
<comment type="function">
    <text evidence="1">ATP-dependent agmatine transferase that catalyzes the formation of 2-agmatinylcytidine (agm2C) at the wobble position (C34) of tRNA(Ile2), converting the codon specificity from AUG to AUA.</text>
</comment>
<comment type="catalytic activity">
    <reaction evidence="1">
        <text>cytidine(34) in tRNA(Ile2) + agmatine + ATP + H2O = 2-agmatinylcytidine(34) in tRNA(Ile2) + AMP + 2 phosphate + 2 H(+)</text>
        <dbReference type="Rhea" id="RHEA:43608"/>
        <dbReference type="Rhea" id="RHEA-COMP:10625"/>
        <dbReference type="Rhea" id="RHEA-COMP:10626"/>
        <dbReference type="ChEBI" id="CHEBI:15377"/>
        <dbReference type="ChEBI" id="CHEBI:15378"/>
        <dbReference type="ChEBI" id="CHEBI:30616"/>
        <dbReference type="ChEBI" id="CHEBI:43474"/>
        <dbReference type="ChEBI" id="CHEBI:58145"/>
        <dbReference type="ChEBI" id="CHEBI:82748"/>
        <dbReference type="ChEBI" id="CHEBI:83545"/>
        <dbReference type="ChEBI" id="CHEBI:456215"/>
        <dbReference type="EC" id="6.3.4.22"/>
    </reaction>
</comment>
<comment type="subcellular location">
    <subcellularLocation>
        <location evidence="1">Cytoplasm</location>
    </subcellularLocation>
</comment>
<comment type="similarity">
    <text evidence="1">Belongs to the TiaS family.</text>
</comment>
<keyword id="KW-0067">ATP-binding</keyword>
<keyword id="KW-0963">Cytoplasm</keyword>
<keyword id="KW-0436">Ligase</keyword>
<keyword id="KW-0547">Nucleotide-binding</keyword>
<keyword id="KW-1185">Reference proteome</keyword>
<keyword id="KW-0819">tRNA processing</keyword>
<feature type="chain" id="PRO_0000407292" description="tRNA(Ile2) 2-agmatinylcytidine synthetase TiaS">
    <location>
        <begin position="1"/>
        <end position="429"/>
    </location>
</feature>
<feature type="region of interest" description="Disordered" evidence="2">
    <location>
        <begin position="403"/>
        <end position="429"/>
    </location>
</feature>
<sequence>MSIQEDGLEPMLLAIGIDSFDTPLAGCTTHFTSILAYTLSIHGYRLADYPWLVRLNPAVPWKTRGNGATALLVSVDREDEARRVAEEVTSRLAKAYGSTGKESFVAILLYHADNLQDYITARPHCLVELYRRAVHELVPLKTAMNCLESIREDGKTKLIALHGSTHRGLVGALAALGADLITDHTFELIVYRKPRMWSEPRRIDEDSIIEFDLKTRPLTFLNYDYEQSKPLIAPHGFDPVLYGVRGEEPHILLKALKIIDVEEEPSHWTIFRTNQATNAHLQRKEIERVRPYDNAIVCGVIEDTKPIPGGHVIVRLCNNTCIDTAFYRETGRLRNHVLKLPRGTLVEVGGQVKPHTDKLTLNAEYLRILEPASLRAGGCTATIPSGRNVILYPPRAAFHHLMKPPERPLHPSKSLEPPSTPIHSDTISL</sequence>